<evidence type="ECO:0000255" key="1">
    <source>
        <dbReference type="HAMAP-Rule" id="MF_00535"/>
    </source>
</evidence>
<proteinExistence type="inferred from homology"/>
<name>CYNS_BURCJ</name>
<feature type="chain" id="PRO_1000128222" description="Cyanate hydratase">
    <location>
        <begin position="1"/>
        <end position="156"/>
    </location>
</feature>
<feature type="active site" evidence="1">
    <location>
        <position position="96"/>
    </location>
</feature>
<feature type="active site" evidence="1">
    <location>
        <position position="99"/>
    </location>
</feature>
<feature type="active site" evidence="1">
    <location>
        <position position="122"/>
    </location>
</feature>
<gene>
    <name evidence="1" type="primary">cynS</name>
    <name type="ordered locus">BceJ2315_38620</name>
    <name type="ORF">BCAM0401</name>
</gene>
<comment type="function">
    <text evidence="1">Catalyzes the reaction of cyanate with bicarbonate to produce ammonia and carbon dioxide.</text>
</comment>
<comment type="catalytic activity">
    <reaction evidence="1">
        <text>cyanate + hydrogencarbonate + 3 H(+) = NH4(+) + 2 CO2</text>
        <dbReference type="Rhea" id="RHEA:11120"/>
        <dbReference type="ChEBI" id="CHEBI:15378"/>
        <dbReference type="ChEBI" id="CHEBI:16526"/>
        <dbReference type="ChEBI" id="CHEBI:17544"/>
        <dbReference type="ChEBI" id="CHEBI:28938"/>
        <dbReference type="ChEBI" id="CHEBI:29195"/>
        <dbReference type="EC" id="4.2.1.104"/>
    </reaction>
</comment>
<comment type="similarity">
    <text evidence="1">Belongs to the cyanase family.</text>
</comment>
<protein>
    <recommendedName>
        <fullName evidence="1">Cyanate hydratase</fullName>
        <shortName evidence="1">Cyanase</shortName>
        <ecNumber evidence="1">4.2.1.104</ecNumber>
    </recommendedName>
    <alternativeName>
        <fullName evidence="1">Cyanate hydrolase</fullName>
    </alternativeName>
    <alternativeName>
        <fullName evidence="1">Cyanate lyase</fullName>
    </alternativeName>
</protein>
<keyword id="KW-0456">Lyase</keyword>
<reference key="1">
    <citation type="journal article" date="2009" name="J. Bacteriol.">
        <title>The genome of Burkholderia cenocepacia J2315, an epidemic pathogen of cystic fibrosis patients.</title>
        <authorList>
            <person name="Holden M.T."/>
            <person name="Seth-Smith H.M."/>
            <person name="Crossman L.C."/>
            <person name="Sebaihia M."/>
            <person name="Bentley S.D."/>
            <person name="Cerdeno-Tarraga A.M."/>
            <person name="Thomson N.R."/>
            <person name="Bason N."/>
            <person name="Quail M.A."/>
            <person name="Sharp S."/>
            <person name="Cherevach I."/>
            <person name="Churcher C."/>
            <person name="Goodhead I."/>
            <person name="Hauser H."/>
            <person name="Holroyd N."/>
            <person name="Mungall K."/>
            <person name="Scott P."/>
            <person name="Walker D."/>
            <person name="White B."/>
            <person name="Rose H."/>
            <person name="Iversen P."/>
            <person name="Mil-Homens D."/>
            <person name="Rocha E.P."/>
            <person name="Fialho A.M."/>
            <person name="Baldwin A."/>
            <person name="Dowson C."/>
            <person name="Barrell B.G."/>
            <person name="Govan J.R."/>
            <person name="Vandamme P."/>
            <person name="Hart C.A."/>
            <person name="Mahenthiralingam E."/>
            <person name="Parkhill J."/>
        </authorList>
    </citation>
    <scope>NUCLEOTIDE SEQUENCE [LARGE SCALE GENOMIC DNA]</scope>
    <source>
        <strain>ATCC BAA-245 / DSM 16553 / LMG 16656 / NCTC 13227 / J2315 / CF5610</strain>
    </source>
</reference>
<dbReference type="EC" id="4.2.1.104" evidence="1"/>
<dbReference type="EMBL" id="AM747721">
    <property type="protein sequence ID" value="CAR54257.1"/>
    <property type="molecule type" value="Genomic_DNA"/>
</dbReference>
<dbReference type="RefSeq" id="WP_006485483.1">
    <property type="nucleotide sequence ID" value="NC_011001.1"/>
</dbReference>
<dbReference type="SMR" id="B4EJC2"/>
<dbReference type="KEGG" id="bcj:BCAM0401"/>
<dbReference type="eggNOG" id="COG1513">
    <property type="taxonomic scope" value="Bacteria"/>
</dbReference>
<dbReference type="HOGENOM" id="CLU_103452_1_1_4"/>
<dbReference type="BioCyc" id="BCEN216591:G1G1V-4356-MONOMER"/>
<dbReference type="Proteomes" id="UP000001035">
    <property type="component" value="Chromosome 2"/>
</dbReference>
<dbReference type="GO" id="GO:0008824">
    <property type="term" value="F:cyanate hydratase activity"/>
    <property type="evidence" value="ECO:0007669"/>
    <property type="project" value="UniProtKB-UniRule"/>
</dbReference>
<dbReference type="GO" id="GO:0003677">
    <property type="term" value="F:DNA binding"/>
    <property type="evidence" value="ECO:0007669"/>
    <property type="project" value="InterPro"/>
</dbReference>
<dbReference type="GO" id="GO:0009439">
    <property type="term" value="P:cyanate metabolic process"/>
    <property type="evidence" value="ECO:0007669"/>
    <property type="project" value="UniProtKB-UniRule"/>
</dbReference>
<dbReference type="CDD" id="cd00559">
    <property type="entry name" value="Cyanase_C"/>
    <property type="match status" value="1"/>
</dbReference>
<dbReference type="FunFam" id="3.30.1160.10:FF:000001">
    <property type="entry name" value="Cyanate hydratase"/>
    <property type="match status" value="1"/>
</dbReference>
<dbReference type="Gene3D" id="3.30.1160.10">
    <property type="entry name" value="Cyanate lyase, C-terminal domain"/>
    <property type="match status" value="1"/>
</dbReference>
<dbReference type="Gene3D" id="1.10.260.40">
    <property type="entry name" value="lambda repressor-like DNA-binding domains"/>
    <property type="match status" value="1"/>
</dbReference>
<dbReference type="HAMAP" id="MF_00535">
    <property type="entry name" value="Cyanate_hydrat"/>
    <property type="match status" value="1"/>
</dbReference>
<dbReference type="InterPro" id="IPR008076">
    <property type="entry name" value="Cyanase"/>
</dbReference>
<dbReference type="InterPro" id="IPR003712">
    <property type="entry name" value="Cyanate_lyase_C"/>
</dbReference>
<dbReference type="InterPro" id="IPR036581">
    <property type="entry name" value="Cyanate_lyase_C_sf"/>
</dbReference>
<dbReference type="InterPro" id="IPR048564">
    <property type="entry name" value="CYNS_N"/>
</dbReference>
<dbReference type="InterPro" id="IPR010982">
    <property type="entry name" value="Lambda_DNA-bd_dom_sf"/>
</dbReference>
<dbReference type="NCBIfam" id="TIGR00673">
    <property type="entry name" value="cynS"/>
    <property type="match status" value="1"/>
</dbReference>
<dbReference type="NCBIfam" id="NF002773">
    <property type="entry name" value="PRK02866.1"/>
    <property type="match status" value="1"/>
</dbReference>
<dbReference type="PANTHER" id="PTHR34186">
    <property type="entry name" value="CYANATE HYDRATASE"/>
    <property type="match status" value="1"/>
</dbReference>
<dbReference type="PANTHER" id="PTHR34186:SF2">
    <property type="entry name" value="CYANATE HYDRATASE"/>
    <property type="match status" value="1"/>
</dbReference>
<dbReference type="Pfam" id="PF02560">
    <property type="entry name" value="Cyanate_lyase"/>
    <property type="match status" value="1"/>
</dbReference>
<dbReference type="Pfam" id="PF21291">
    <property type="entry name" value="CYNS_N"/>
    <property type="match status" value="1"/>
</dbReference>
<dbReference type="PIRSF" id="PIRSF001263">
    <property type="entry name" value="Cyanate_hydratas"/>
    <property type="match status" value="1"/>
</dbReference>
<dbReference type="PRINTS" id="PR01693">
    <property type="entry name" value="CYANASE"/>
</dbReference>
<dbReference type="SMART" id="SM01116">
    <property type="entry name" value="Cyanate_lyase"/>
    <property type="match status" value="1"/>
</dbReference>
<dbReference type="SUPFAM" id="SSF55234">
    <property type="entry name" value="Cyanase C-terminal domain"/>
    <property type="match status" value="1"/>
</dbReference>
<dbReference type="SUPFAM" id="SSF47413">
    <property type="entry name" value="lambda repressor-like DNA-binding domains"/>
    <property type="match status" value="1"/>
</dbReference>
<accession>B4EJC2</accession>
<sequence length="156" mass="16931">MIQSQHSQTARHALAETVVLAKARKNLSFAQLTDGTGLSEAFVTAALLGQHALPADAARIVADKLGLDDDAVLLLQTIPLRGSIDDRVPTDPTIYRFYEMLQVYGTTLKALVHEKFGDGIISAINFRLDVKKVDDPEGGSRAVITLDGKYLPTKPF</sequence>
<organism>
    <name type="scientific">Burkholderia cenocepacia (strain ATCC BAA-245 / DSM 16553 / LMG 16656 / NCTC 13227 / J2315 / CF5610)</name>
    <name type="common">Burkholderia cepacia (strain J2315)</name>
    <dbReference type="NCBI Taxonomy" id="216591"/>
    <lineage>
        <taxon>Bacteria</taxon>
        <taxon>Pseudomonadati</taxon>
        <taxon>Pseudomonadota</taxon>
        <taxon>Betaproteobacteria</taxon>
        <taxon>Burkholderiales</taxon>
        <taxon>Burkholderiaceae</taxon>
        <taxon>Burkholderia</taxon>
        <taxon>Burkholderia cepacia complex</taxon>
    </lineage>
</organism>